<feature type="chain" id="PRO_1000004338" description="UDP-N-acetylmuramate--L-alanine ligase">
    <location>
        <begin position="1"/>
        <end position="454"/>
    </location>
</feature>
<feature type="binding site" evidence="1">
    <location>
        <begin position="112"/>
        <end position="118"/>
    </location>
    <ligand>
        <name>ATP</name>
        <dbReference type="ChEBI" id="CHEBI:30616"/>
    </ligand>
</feature>
<reference key="1">
    <citation type="journal article" date="2009" name="Environ. Microbiol.">
        <title>Contribution of mobile genetic elements to Desulfovibrio vulgaris genome plasticity.</title>
        <authorList>
            <person name="Walker C.B."/>
            <person name="Stolyar S."/>
            <person name="Chivian D."/>
            <person name="Pinel N."/>
            <person name="Gabster J.A."/>
            <person name="Dehal P.S."/>
            <person name="He Z."/>
            <person name="Yang Z.K."/>
            <person name="Yen H.C."/>
            <person name="Zhou J."/>
            <person name="Wall J.D."/>
            <person name="Hazen T.C."/>
            <person name="Arkin A.P."/>
            <person name="Stahl D.A."/>
        </authorList>
    </citation>
    <scope>NUCLEOTIDE SEQUENCE [LARGE SCALE GENOMIC DNA]</scope>
    <source>
        <strain>DP4</strain>
    </source>
</reference>
<proteinExistence type="inferred from homology"/>
<accession>A1VBE9</accession>
<organism>
    <name type="scientific">Nitratidesulfovibrio vulgaris (strain DP4)</name>
    <name type="common">Desulfovibrio vulgaris</name>
    <dbReference type="NCBI Taxonomy" id="391774"/>
    <lineage>
        <taxon>Bacteria</taxon>
        <taxon>Pseudomonadati</taxon>
        <taxon>Thermodesulfobacteriota</taxon>
        <taxon>Desulfovibrionia</taxon>
        <taxon>Desulfovibrionales</taxon>
        <taxon>Desulfovibrionaceae</taxon>
        <taxon>Nitratidesulfovibrio</taxon>
    </lineage>
</organism>
<comment type="function">
    <text evidence="1">Cell wall formation.</text>
</comment>
<comment type="catalytic activity">
    <reaction evidence="1">
        <text>UDP-N-acetyl-alpha-D-muramate + L-alanine + ATP = UDP-N-acetyl-alpha-D-muramoyl-L-alanine + ADP + phosphate + H(+)</text>
        <dbReference type="Rhea" id="RHEA:23372"/>
        <dbReference type="ChEBI" id="CHEBI:15378"/>
        <dbReference type="ChEBI" id="CHEBI:30616"/>
        <dbReference type="ChEBI" id="CHEBI:43474"/>
        <dbReference type="ChEBI" id="CHEBI:57972"/>
        <dbReference type="ChEBI" id="CHEBI:70757"/>
        <dbReference type="ChEBI" id="CHEBI:83898"/>
        <dbReference type="ChEBI" id="CHEBI:456216"/>
        <dbReference type="EC" id="6.3.2.8"/>
    </reaction>
</comment>
<comment type="pathway">
    <text evidence="1">Cell wall biogenesis; peptidoglycan biosynthesis.</text>
</comment>
<comment type="subcellular location">
    <subcellularLocation>
        <location evidence="1">Cytoplasm</location>
    </subcellularLocation>
</comment>
<comment type="similarity">
    <text evidence="1">Belongs to the MurCDEF family.</text>
</comment>
<keyword id="KW-0067">ATP-binding</keyword>
<keyword id="KW-0131">Cell cycle</keyword>
<keyword id="KW-0132">Cell division</keyword>
<keyword id="KW-0133">Cell shape</keyword>
<keyword id="KW-0961">Cell wall biogenesis/degradation</keyword>
<keyword id="KW-0963">Cytoplasm</keyword>
<keyword id="KW-0436">Ligase</keyword>
<keyword id="KW-0547">Nucleotide-binding</keyword>
<keyword id="KW-0573">Peptidoglycan synthesis</keyword>
<dbReference type="EC" id="6.3.2.8" evidence="1"/>
<dbReference type="EMBL" id="CP000527">
    <property type="protein sequence ID" value="ABM27765.1"/>
    <property type="molecule type" value="Genomic_DNA"/>
</dbReference>
<dbReference type="RefSeq" id="WP_010939773.1">
    <property type="nucleotide sequence ID" value="NC_008751.1"/>
</dbReference>
<dbReference type="SMR" id="A1VBE9"/>
<dbReference type="KEGG" id="dvl:Dvul_0742"/>
<dbReference type="HOGENOM" id="CLU_028104_2_2_7"/>
<dbReference type="UniPathway" id="UPA00219"/>
<dbReference type="Proteomes" id="UP000009173">
    <property type="component" value="Chromosome"/>
</dbReference>
<dbReference type="GO" id="GO:0005737">
    <property type="term" value="C:cytoplasm"/>
    <property type="evidence" value="ECO:0007669"/>
    <property type="project" value="UniProtKB-SubCell"/>
</dbReference>
<dbReference type="GO" id="GO:0005524">
    <property type="term" value="F:ATP binding"/>
    <property type="evidence" value="ECO:0007669"/>
    <property type="project" value="UniProtKB-UniRule"/>
</dbReference>
<dbReference type="GO" id="GO:0008763">
    <property type="term" value="F:UDP-N-acetylmuramate-L-alanine ligase activity"/>
    <property type="evidence" value="ECO:0007669"/>
    <property type="project" value="UniProtKB-UniRule"/>
</dbReference>
<dbReference type="GO" id="GO:0051301">
    <property type="term" value="P:cell division"/>
    <property type="evidence" value="ECO:0007669"/>
    <property type="project" value="UniProtKB-KW"/>
</dbReference>
<dbReference type="GO" id="GO:0071555">
    <property type="term" value="P:cell wall organization"/>
    <property type="evidence" value="ECO:0007669"/>
    <property type="project" value="UniProtKB-KW"/>
</dbReference>
<dbReference type="GO" id="GO:0009252">
    <property type="term" value="P:peptidoglycan biosynthetic process"/>
    <property type="evidence" value="ECO:0007669"/>
    <property type="project" value="UniProtKB-UniRule"/>
</dbReference>
<dbReference type="GO" id="GO:0008360">
    <property type="term" value="P:regulation of cell shape"/>
    <property type="evidence" value="ECO:0007669"/>
    <property type="project" value="UniProtKB-KW"/>
</dbReference>
<dbReference type="Gene3D" id="3.90.190.20">
    <property type="entry name" value="Mur ligase, C-terminal domain"/>
    <property type="match status" value="1"/>
</dbReference>
<dbReference type="Gene3D" id="3.40.1190.10">
    <property type="entry name" value="Mur-like, catalytic domain"/>
    <property type="match status" value="1"/>
</dbReference>
<dbReference type="Gene3D" id="3.40.50.720">
    <property type="entry name" value="NAD(P)-binding Rossmann-like Domain"/>
    <property type="match status" value="1"/>
</dbReference>
<dbReference type="HAMAP" id="MF_00046">
    <property type="entry name" value="MurC"/>
    <property type="match status" value="1"/>
</dbReference>
<dbReference type="InterPro" id="IPR036565">
    <property type="entry name" value="Mur-like_cat_sf"/>
</dbReference>
<dbReference type="InterPro" id="IPR004101">
    <property type="entry name" value="Mur_ligase_C"/>
</dbReference>
<dbReference type="InterPro" id="IPR036615">
    <property type="entry name" value="Mur_ligase_C_dom_sf"/>
</dbReference>
<dbReference type="InterPro" id="IPR013221">
    <property type="entry name" value="Mur_ligase_cen"/>
</dbReference>
<dbReference type="InterPro" id="IPR000713">
    <property type="entry name" value="Mur_ligase_N"/>
</dbReference>
<dbReference type="InterPro" id="IPR050061">
    <property type="entry name" value="MurCDEF_pg_biosynth"/>
</dbReference>
<dbReference type="InterPro" id="IPR005758">
    <property type="entry name" value="UDP-N-AcMur_Ala_ligase_MurC"/>
</dbReference>
<dbReference type="NCBIfam" id="TIGR01082">
    <property type="entry name" value="murC"/>
    <property type="match status" value="1"/>
</dbReference>
<dbReference type="PANTHER" id="PTHR43445:SF3">
    <property type="entry name" value="UDP-N-ACETYLMURAMATE--L-ALANINE LIGASE"/>
    <property type="match status" value="1"/>
</dbReference>
<dbReference type="PANTHER" id="PTHR43445">
    <property type="entry name" value="UDP-N-ACETYLMURAMATE--L-ALANINE LIGASE-RELATED"/>
    <property type="match status" value="1"/>
</dbReference>
<dbReference type="Pfam" id="PF01225">
    <property type="entry name" value="Mur_ligase"/>
    <property type="match status" value="1"/>
</dbReference>
<dbReference type="Pfam" id="PF02875">
    <property type="entry name" value="Mur_ligase_C"/>
    <property type="match status" value="1"/>
</dbReference>
<dbReference type="Pfam" id="PF08245">
    <property type="entry name" value="Mur_ligase_M"/>
    <property type="match status" value="1"/>
</dbReference>
<dbReference type="SUPFAM" id="SSF51984">
    <property type="entry name" value="MurCD N-terminal domain"/>
    <property type="match status" value="1"/>
</dbReference>
<dbReference type="SUPFAM" id="SSF53623">
    <property type="entry name" value="MurD-like peptide ligases, catalytic domain"/>
    <property type="match status" value="1"/>
</dbReference>
<dbReference type="SUPFAM" id="SSF53244">
    <property type="entry name" value="MurD-like peptide ligases, peptide-binding domain"/>
    <property type="match status" value="1"/>
</dbReference>
<protein>
    <recommendedName>
        <fullName evidence="1">UDP-N-acetylmuramate--L-alanine ligase</fullName>
        <ecNumber evidence="1">6.3.2.8</ecNumber>
    </recommendedName>
    <alternativeName>
        <fullName evidence="1">UDP-N-acetylmuramoyl-L-alanine synthetase</fullName>
    </alternativeName>
</protein>
<evidence type="ECO:0000255" key="1">
    <source>
        <dbReference type="HAMAP-Rule" id="MF_00046"/>
    </source>
</evidence>
<name>MURC_NITV4</name>
<sequence length="454" mass="48604">MKNKVRTIHMVGIGGSGMSGIAEVLLNLGYAVHGSDMSDSAVVRRLRKIGAEIFIGHGAGNVSDAEVLVKSTAVRDDNPEVLAAVEKGIPIIPRAEMLAELMRLRTGIAIAGTHGKTTTTSLTAAIFDVAGKDPTVIIGGRLNAYGANARLGEGEYLIAEADESDGSFLCLFPIVNVVTNVDMDHVDFYAGQKEIDEAFVTFMNKVPFYGANVVCGDDPGVRRLLPQVKRRVVTYGFGKDNALRAEVTSCAETSVFTVFLRGGRLGEVHLGQPGRHNILNALAAIGVALEAGISPEHCIEGLARFGGVGRRFERRGERDGVTVVDDYGHHPVEIAATLATARSVYPDRRLVVVFQPHRFSRTQALFGEFCKVFEPVDKLLLTEIYPASEKPIPGVSGQSLAQGIRQVSNTDVTYYQSFDEILAALPGVLRPGDVLLTLGAGSVTTIGQRYVAGE</sequence>
<gene>
    <name evidence="1" type="primary">murC</name>
    <name type="ordered locus">Dvul_0742</name>
</gene>